<gene>
    <name evidence="1" type="primary">der</name>
    <name type="synonym">engA</name>
    <name type="ordered locus">SP70585_1747</name>
</gene>
<protein>
    <recommendedName>
        <fullName evidence="1">GTPase Der</fullName>
    </recommendedName>
    <alternativeName>
        <fullName evidence="1">GTP-binding protein EngA</fullName>
    </alternativeName>
</protein>
<proteinExistence type="inferred from homology"/>
<name>DER_STRP7</name>
<sequence length="436" mass="49082">MALPTIAIVGRPNVGKSTLFNRIAGERISIVEDVEGVTRDRIYATGEWLNRSFSMIDTGGIDDVDAPFMEQIKHQAEIAMEEADVIVFVVSGKEGITDADEYVARKLYKTHKPVILAVNKVDNPEMRNDIYDFYALGLGEPLPISSVHGIGTGDVLDAIVENLPNEYEEENPDVIKFSLIGRPNVGKSSLINAILGEDRVIASPVAGTTRDAIDTHFTDTDGQEFTMIDTAGMRKSGKVYENTEKYSVMRAMRAIDRSDVVLMVINAEEGIREYDKRIAGFAHEAGKGMIIVVNKWDTLEKDNHTMKNWEEDIREQFQYLPYAPIIFVSALTKQRLHKLPEMIKQISESQNTRIPSAVLNDVIMDAIAINPTPTDKGKRLKIFYATQVATKPPTFVIFVNEEELMHFSYLRFLENQIRKAFVFEGTPIHLIARKRK</sequence>
<reference key="1">
    <citation type="journal article" date="2010" name="Genome Biol.">
        <title>Structure and dynamics of the pan-genome of Streptococcus pneumoniae and closely related species.</title>
        <authorList>
            <person name="Donati C."/>
            <person name="Hiller N.L."/>
            <person name="Tettelin H."/>
            <person name="Muzzi A."/>
            <person name="Croucher N.J."/>
            <person name="Angiuoli S.V."/>
            <person name="Oggioni M."/>
            <person name="Dunning Hotopp J.C."/>
            <person name="Hu F.Z."/>
            <person name="Riley D.R."/>
            <person name="Covacci A."/>
            <person name="Mitchell T.J."/>
            <person name="Bentley S.D."/>
            <person name="Kilian M."/>
            <person name="Ehrlich G.D."/>
            <person name="Rappuoli R."/>
            <person name="Moxon E.R."/>
            <person name="Masignani V."/>
        </authorList>
    </citation>
    <scope>NUCLEOTIDE SEQUENCE [LARGE SCALE GENOMIC DNA]</scope>
    <source>
        <strain>70585</strain>
    </source>
</reference>
<organism>
    <name type="scientific">Streptococcus pneumoniae (strain 70585)</name>
    <dbReference type="NCBI Taxonomy" id="488221"/>
    <lineage>
        <taxon>Bacteria</taxon>
        <taxon>Bacillati</taxon>
        <taxon>Bacillota</taxon>
        <taxon>Bacilli</taxon>
        <taxon>Lactobacillales</taxon>
        <taxon>Streptococcaceae</taxon>
        <taxon>Streptococcus</taxon>
    </lineage>
</organism>
<comment type="function">
    <text evidence="1">GTPase that plays an essential role in the late steps of ribosome biogenesis.</text>
</comment>
<comment type="subunit">
    <text evidence="1">Associates with the 50S ribosomal subunit.</text>
</comment>
<comment type="similarity">
    <text evidence="1">Belongs to the TRAFAC class TrmE-Era-EngA-EngB-Septin-like GTPase superfamily. EngA (Der) GTPase family.</text>
</comment>
<accession>C1C8U6</accession>
<dbReference type="EMBL" id="CP000918">
    <property type="protein sequence ID" value="ACO17336.1"/>
    <property type="molecule type" value="Genomic_DNA"/>
</dbReference>
<dbReference type="RefSeq" id="WP_001207696.1">
    <property type="nucleotide sequence ID" value="NC_012468.1"/>
</dbReference>
<dbReference type="SMR" id="C1C8U6"/>
<dbReference type="GeneID" id="93740105"/>
<dbReference type="KEGG" id="snm:SP70585_1747"/>
<dbReference type="HOGENOM" id="CLU_016077_6_2_9"/>
<dbReference type="Proteomes" id="UP000002211">
    <property type="component" value="Chromosome"/>
</dbReference>
<dbReference type="GO" id="GO:0005525">
    <property type="term" value="F:GTP binding"/>
    <property type="evidence" value="ECO:0007669"/>
    <property type="project" value="UniProtKB-UniRule"/>
</dbReference>
<dbReference type="GO" id="GO:0043022">
    <property type="term" value="F:ribosome binding"/>
    <property type="evidence" value="ECO:0007669"/>
    <property type="project" value="TreeGrafter"/>
</dbReference>
<dbReference type="GO" id="GO:0042254">
    <property type="term" value="P:ribosome biogenesis"/>
    <property type="evidence" value="ECO:0007669"/>
    <property type="project" value="UniProtKB-KW"/>
</dbReference>
<dbReference type="CDD" id="cd01894">
    <property type="entry name" value="EngA1"/>
    <property type="match status" value="1"/>
</dbReference>
<dbReference type="CDD" id="cd01895">
    <property type="entry name" value="EngA2"/>
    <property type="match status" value="1"/>
</dbReference>
<dbReference type="FunFam" id="3.30.300.20:FF:000004">
    <property type="entry name" value="GTPase Der"/>
    <property type="match status" value="1"/>
</dbReference>
<dbReference type="FunFam" id="3.40.50.300:FF:000040">
    <property type="entry name" value="GTPase Der"/>
    <property type="match status" value="1"/>
</dbReference>
<dbReference type="FunFam" id="3.40.50.300:FF:000057">
    <property type="entry name" value="GTPase Der"/>
    <property type="match status" value="1"/>
</dbReference>
<dbReference type="Gene3D" id="3.30.300.20">
    <property type="match status" value="1"/>
</dbReference>
<dbReference type="Gene3D" id="3.40.50.300">
    <property type="entry name" value="P-loop containing nucleotide triphosphate hydrolases"/>
    <property type="match status" value="2"/>
</dbReference>
<dbReference type="HAMAP" id="MF_00195">
    <property type="entry name" value="GTPase_Der"/>
    <property type="match status" value="1"/>
</dbReference>
<dbReference type="InterPro" id="IPR031166">
    <property type="entry name" value="G_ENGA"/>
</dbReference>
<dbReference type="InterPro" id="IPR006073">
    <property type="entry name" value="GTP-bd"/>
</dbReference>
<dbReference type="InterPro" id="IPR016484">
    <property type="entry name" value="GTPase_Der"/>
</dbReference>
<dbReference type="InterPro" id="IPR032859">
    <property type="entry name" value="KH_dom-like"/>
</dbReference>
<dbReference type="InterPro" id="IPR015946">
    <property type="entry name" value="KH_dom-like_a/b"/>
</dbReference>
<dbReference type="InterPro" id="IPR027417">
    <property type="entry name" value="P-loop_NTPase"/>
</dbReference>
<dbReference type="InterPro" id="IPR005225">
    <property type="entry name" value="Small_GTP-bd"/>
</dbReference>
<dbReference type="NCBIfam" id="TIGR03594">
    <property type="entry name" value="GTPase_EngA"/>
    <property type="match status" value="1"/>
</dbReference>
<dbReference type="NCBIfam" id="TIGR00231">
    <property type="entry name" value="small_GTP"/>
    <property type="match status" value="2"/>
</dbReference>
<dbReference type="PANTHER" id="PTHR43834">
    <property type="entry name" value="GTPASE DER"/>
    <property type="match status" value="1"/>
</dbReference>
<dbReference type="PANTHER" id="PTHR43834:SF6">
    <property type="entry name" value="GTPASE DER"/>
    <property type="match status" value="1"/>
</dbReference>
<dbReference type="Pfam" id="PF14714">
    <property type="entry name" value="KH_dom-like"/>
    <property type="match status" value="1"/>
</dbReference>
<dbReference type="Pfam" id="PF01926">
    <property type="entry name" value="MMR_HSR1"/>
    <property type="match status" value="2"/>
</dbReference>
<dbReference type="PIRSF" id="PIRSF006485">
    <property type="entry name" value="GTP-binding_EngA"/>
    <property type="match status" value="1"/>
</dbReference>
<dbReference type="PRINTS" id="PR00326">
    <property type="entry name" value="GTP1OBG"/>
</dbReference>
<dbReference type="SUPFAM" id="SSF52540">
    <property type="entry name" value="P-loop containing nucleoside triphosphate hydrolases"/>
    <property type="match status" value="2"/>
</dbReference>
<dbReference type="PROSITE" id="PS51712">
    <property type="entry name" value="G_ENGA"/>
    <property type="match status" value="2"/>
</dbReference>
<evidence type="ECO:0000255" key="1">
    <source>
        <dbReference type="HAMAP-Rule" id="MF_00195"/>
    </source>
</evidence>
<keyword id="KW-0342">GTP-binding</keyword>
<keyword id="KW-0547">Nucleotide-binding</keyword>
<keyword id="KW-0677">Repeat</keyword>
<keyword id="KW-0690">Ribosome biogenesis</keyword>
<feature type="chain" id="PRO_1000124372" description="GTPase Der">
    <location>
        <begin position="1"/>
        <end position="436"/>
    </location>
</feature>
<feature type="domain" description="EngA-type G 1">
    <location>
        <begin position="4"/>
        <end position="167"/>
    </location>
</feature>
<feature type="domain" description="EngA-type G 2">
    <location>
        <begin position="175"/>
        <end position="351"/>
    </location>
</feature>
<feature type="domain" description="KH-like" evidence="1">
    <location>
        <begin position="352"/>
        <end position="436"/>
    </location>
</feature>
<feature type="binding site" evidence="1">
    <location>
        <begin position="10"/>
        <end position="17"/>
    </location>
    <ligand>
        <name>GTP</name>
        <dbReference type="ChEBI" id="CHEBI:37565"/>
        <label>1</label>
    </ligand>
</feature>
<feature type="binding site" evidence="1">
    <location>
        <begin position="57"/>
        <end position="61"/>
    </location>
    <ligand>
        <name>GTP</name>
        <dbReference type="ChEBI" id="CHEBI:37565"/>
        <label>1</label>
    </ligand>
</feature>
<feature type="binding site" evidence="1">
    <location>
        <begin position="119"/>
        <end position="122"/>
    </location>
    <ligand>
        <name>GTP</name>
        <dbReference type="ChEBI" id="CHEBI:37565"/>
        <label>1</label>
    </ligand>
</feature>
<feature type="binding site" evidence="1">
    <location>
        <begin position="181"/>
        <end position="188"/>
    </location>
    <ligand>
        <name>GTP</name>
        <dbReference type="ChEBI" id="CHEBI:37565"/>
        <label>2</label>
    </ligand>
</feature>
<feature type="binding site" evidence="1">
    <location>
        <begin position="229"/>
        <end position="233"/>
    </location>
    <ligand>
        <name>GTP</name>
        <dbReference type="ChEBI" id="CHEBI:37565"/>
        <label>2</label>
    </ligand>
</feature>
<feature type="binding site" evidence="1">
    <location>
        <begin position="294"/>
        <end position="297"/>
    </location>
    <ligand>
        <name>GTP</name>
        <dbReference type="ChEBI" id="CHEBI:37565"/>
        <label>2</label>
    </ligand>
</feature>